<comment type="function">
    <text evidence="1">With S4 and S12 plays an important role in translational accuracy.</text>
</comment>
<comment type="function">
    <text evidence="1">Located at the back of the 30S subunit body where it stabilizes the conformation of the head with respect to the body.</text>
</comment>
<comment type="subunit">
    <text evidence="1">Part of the 30S ribosomal subunit. Contacts proteins S4 and S8.</text>
</comment>
<comment type="domain">
    <text>The N-terminal domain interacts with the head of the 30S subunit; the C-terminal domain interacts with the body and contacts protein S4. The interaction surface between S4 and S5 is involved in control of translational fidelity.</text>
</comment>
<comment type="similarity">
    <text evidence="1">Belongs to the universal ribosomal protein uS5 family.</text>
</comment>
<sequence length="220" mass="22888">MAEQPAGQAGTTDNRDARGDREGRRRDSGRGSRERDGEKSNYLERVVAINRVSKVVKGGRRFSFTALVIVGDGNGMVGVGYGKAKEVPAAIAKGVEEARKSFFRVPLIGGTITHPVQGEAAAGVVLLRPASPGTGVIAGGAARAVLECAGVHDILAKSLGSDNAINVVHATVAALKLLQRPEEVAARRGLPIEDVAPAGMLKARRKSEALAASVLPDRTI</sequence>
<feature type="chain" id="PRO_0000131557" description="Small ribosomal subunit protein uS5">
    <location>
        <begin position="1"/>
        <end position="220"/>
    </location>
</feature>
<feature type="domain" description="S5 DRBM" evidence="1">
    <location>
        <begin position="42"/>
        <end position="105"/>
    </location>
</feature>
<feature type="region of interest" description="Disordered" evidence="2">
    <location>
        <begin position="1"/>
        <end position="39"/>
    </location>
</feature>
<feature type="compositionally biased region" description="Basic and acidic residues" evidence="2">
    <location>
        <begin position="13"/>
        <end position="39"/>
    </location>
</feature>
<keyword id="KW-1185">Reference proteome</keyword>
<keyword id="KW-0687">Ribonucleoprotein</keyword>
<keyword id="KW-0689">Ribosomal protein</keyword>
<keyword id="KW-0694">RNA-binding</keyword>
<keyword id="KW-0699">rRNA-binding</keyword>
<reference key="1">
    <citation type="journal article" date="2003" name="Proc. Natl. Acad. Sci. U.S.A.">
        <title>The complete genome sequence of Mycobacterium bovis.</title>
        <authorList>
            <person name="Garnier T."/>
            <person name="Eiglmeier K."/>
            <person name="Camus J.-C."/>
            <person name="Medina N."/>
            <person name="Mansoor H."/>
            <person name="Pryor M."/>
            <person name="Duthoy S."/>
            <person name="Grondin S."/>
            <person name="Lacroix C."/>
            <person name="Monsempe C."/>
            <person name="Simon S."/>
            <person name="Harris B."/>
            <person name="Atkin R."/>
            <person name="Doggett J."/>
            <person name="Mayes R."/>
            <person name="Keating L."/>
            <person name="Wheeler P.R."/>
            <person name="Parkhill J."/>
            <person name="Barrell B.G."/>
            <person name="Cole S.T."/>
            <person name="Gordon S.V."/>
            <person name="Hewinson R.G."/>
        </authorList>
    </citation>
    <scope>NUCLEOTIDE SEQUENCE [LARGE SCALE GENOMIC DNA]</scope>
    <source>
        <strain>ATCC BAA-935 / AF2122/97</strain>
    </source>
</reference>
<reference key="2">
    <citation type="journal article" date="2017" name="Genome Announc.">
        <title>Updated reference genome sequence and annotation of Mycobacterium bovis AF2122/97.</title>
        <authorList>
            <person name="Malone K.M."/>
            <person name="Farrell D."/>
            <person name="Stuber T.P."/>
            <person name="Schubert O.T."/>
            <person name="Aebersold R."/>
            <person name="Robbe-Austerman S."/>
            <person name="Gordon S.V."/>
        </authorList>
    </citation>
    <scope>NUCLEOTIDE SEQUENCE [LARGE SCALE GENOMIC DNA]</scope>
    <scope>GENOME REANNOTATION</scope>
    <source>
        <strain>ATCC BAA-935 / AF2122/97</strain>
    </source>
</reference>
<proteinExistence type="inferred from homology"/>
<accession>P66575</accession>
<accession>A0A1R3XW75</accession>
<accession>P95069</accession>
<accession>X2BFT3</accession>
<evidence type="ECO:0000255" key="1">
    <source>
        <dbReference type="HAMAP-Rule" id="MF_01307"/>
    </source>
</evidence>
<evidence type="ECO:0000256" key="2">
    <source>
        <dbReference type="SAM" id="MobiDB-lite"/>
    </source>
</evidence>
<evidence type="ECO:0000305" key="3"/>
<protein>
    <recommendedName>
        <fullName evidence="1">Small ribosomal subunit protein uS5</fullName>
    </recommendedName>
    <alternativeName>
        <fullName evidence="3">30S ribosomal protein S5</fullName>
    </alternativeName>
</protein>
<gene>
    <name evidence="1" type="primary">rpsE</name>
    <name type="ordered locus">BQ2027_MB0742</name>
</gene>
<dbReference type="EMBL" id="LT708304">
    <property type="protein sequence ID" value="SIT99341.1"/>
    <property type="molecule type" value="Genomic_DNA"/>
</dbReference>
<dbReference type="RefSeq" id="NP_854400.1">
    <property type="nucleotide sequence ID" value="NC_002945.3"/>
</dbReference>
<dbReference type="RefSeq" id="WP_003403680.1">
    <property type="nucleotide sequence ID" value="NC_002945.4"/>
</dbReference>
<dbReference type="SMR" id="P66575"/>
<dbReference type="GeneID" id="45424686"/>
<dbReference type="KEGG" id="mbo:BQ2027_MB0742"/>
<dbReference type="PATRIC" id="fig|233413.5.peg.809"/>
<dbReference type="Proteomes" id="UP000001419">
    <property type="component" value="Chromosome"/>
</dbReference>
<dbReference type="GO" id="GO:0015935">
    <property type="term" value="C:small ribosomal subunit"/>
    <property type="evidence" value="ECO:0007669"/>
    <property type="project" value="InterPro"/>
</dbReference>
<dbReference type="GO" id="GO:0019843">
    <property type="term" value="F:rRNA binding"/>
    <property type="evidence" value="ECO:0007669"/>
    <property type="project" value="UniProtKB-UniRule"/>
</dbReference>
<dbReference type="GO" id="GO:0003735">
    <property type="term" value="F:structural constituent of ribosome"/>
    <property type="evidence" value="ECO:0007669"/>
    <property type="project" value="InterPro"/>
</dbReference>
<dbReference type="GO" id="GO:0006412">
    <property type="term" value="P:translation"/>
    <property type="evidence" value="ECO:0007669"/>
    <property type="project" value="UniProtKB-UniRule"/>
</dbReference>
<dbReference type="FunFam" id="3.30.160.20:FF:000001">
    <property type="entry name" value="30S ribosomal protein S5"/>
    <property type="match status" value="1"/>
</dbReference>
<dbReference type="FunFam" id="3.30.230.10:FF:000002">
    <property type="entry name" value="30S ribosomal protein S5"/>
    <property type="match status" value="1"/>
</dbReference>
<dbReference type="Gene3D" id="3.30.160.20">
    <property type="match status" value="1"/>
</dbReference>
<dbReference type="Gene3D" id="3.30.230.10">
    <property type="match status" value="1"/>
</dbReference>
<dbReference type="HAMAP" id="MF_01307_B">
    <property type="entry name" value="Ribosomal_uS5_B"/>
    <property type="match status" value="1"/>
</dbReference>
<dbReference type="InterPro" id="IPR020568">
    <property type="entry name" value="Ribosomal_Su5_D2-typ_SF"/>
</dbReference>
<dbReference type="InterPro" id="IPR000851">
    <property type="entry name" value="Ribosomal_uS5"/>
</dbReference>
<dbReference type="InterPro" id="IPR005712">
    <property type="entry name" value="Ribosomal_uS5_bac-type"/>
</dbReference>
<dbReference type="InterPro" id="IPR005324">
    <property type="entry name" value="Ribosomal_uS5_C"/>
</dbReference>
<dbReference type="InterPro" id="IPR013810">
    <property type="entry name" value="Ribosomal_uS5_N"/>
</dbReference>
<dbReference type="InterPro" id="IPR018192">
    <property type="entry name" value="Ribosomal_uS5_N_CS"/>
</dbReference>
<dbReference type="InterPro" id="IPR014721">
    <property type="entry name" value="Ribsml_uS5_D2-typ_fold_subgr"/>
</dbReference>
<dbReference type="NCBIfam" id="TIGR01021">
    <property type="entry name" value="rpsE_bact"/>
    <property type="match status" value="1"/>
</dbReference>
<dbReference type="PANTHER" id="PTHR48277">
    <property type="entry name" value="MITOCHONDRIAL RIBOSOMAL PROTEIN S5"/>
    <property type="match status" value="1"/>
</dbReference>
<dbReference type="PANTHER" id="PTHR48277:SF1">
    <property type="entry name" value="MITOCHONDRIAL RIBOSOMAL PROTEIN S5"/>
    <property type="match status" value="1"/>
</dbReference>
<dbReference type="Pfam" id="PF00333">
    <property type="entry name" value="Ribosomal_S5"/>
    <property type="match status" value="1"/>
</dbReference>
<dbReference type="Pfam" id="PF03719">
    <property type="entry name" value="Ribosomal_S5_C"/>
    <property type="match status" value="1"/>
</dbReference>
<dbReference type="SUPFAM" id="SSF54768">
    <property type="entry name" value="dsRNA-binding domain-like"/>
    <property type="match status" value="1"/>
</dbReference>
<dbReference type="SUPFAM" id="SSF54211">
    <property type="entry name" value="Ribosomal protein S5 domain 2-like"/>
    <property type="match status" value="1"/>
</dbReference>
<dbReference type="PROSITE" id="PS00585">
    <property type="entry name" value="RIBOSOMAL_S5"/>
    <property type="match status" value="1"/>
</dbReference>
<dbReference type="PROSITE" id="PS50881">
    <property type="entry name" value="S5_DSRBD"/>
    <property type="match status" value="1"/>
</dbReference>
<name>RS5_MYCBO</name>
<organism>
    <name type="scientific">Mycobacterium bovis (strain ATCC BAA-935 / AF2122/97)</name>
    <dbReference type="NCBI Taxonomy" id="233413"/>
    <lineage>
        <taxon>Bacteria</taxon>
        <taxon>Bacillati</taxon>
        <taxon>Actinomycetota</taxon>
        <taxon>Actinomycetes</taxon>
        <taxon>Mycobacteriales</taxon>
        <taxon>Mycobacteriaceae</taxon>
        <taxon>Mycobacterium</taxon>
        <taxon>Mycobacterium tuberculosis complex</taxon>
    </lineage>
</organism>